<protein>
    <recommendedName>
        <fullName evidence="3">Nuclear envelope-associated protein 3</fullName>
        <shortName evidence="3">AtNEAP3</shortName>
    </recommendedName>
</protein>
<sequence>MPTSVSLREDDPLLKDLSEKKQSFRRNVVSLATELKEARTRLAEQERSCSKEAMSRQEAETRVKRMEDEMHELAKELNEKVEQIRASDVATEKFVKELADIKSQLAATHATAEASALSAESAHSHCRVLSKQLHERTGSLKEHEDQVTRLGEQLENLRKELRVRESSQKQLRDELLKVEGDIMRAVSVVKTKENSEVRNMLNEDTPKNSERINKLLTAKDDEIARLRDELKIISAHWRFKTKELEDQVENQRRIDQELKKKVLKLEFCLRETRIQTRKLQKMGERNDVAIQELKEQLAAKKQHEADHSSNQNLWDKSGFKIVVSMSMLILVAFSRR</sequence>
<feature type="chain" id="PRO_0000441688" description="Nuclear envelope-associated protein 3">
    <location>
        <begin position="1"/>
        <end position="336"/>
    </location>
</feature>
<feature type="transmembrane region" description="Helical" evidence="1">
    <location>
        <begin position="313"/>
        <end position="330"/>
    </location>
</feature>
<feature type="coiled-coil region" evidence="1">
    <location>
        <begin position="14"/>
        <end position="87"/>
    </location>
</feature>
<feature type="coiled-coil region" evidence="1">
    <location>
        <begin position="128"/>
        <end position="261"/>
    </location>
</feature>
<feature type="short sequence motif" description="Bipartite nuclear localization signal" evidence="5">
    <location>
        <begin position="240"/>
        <end position="261"/>
    </location>
</feature>
<proteinExistence type="evidence at protein level"/>
<evidence type="ECO:0000255" key="1"/>
<evidence type="ECO:0000269" key="2">
    <source>
    </source>
</evidence>
<evidence type="ECO:0000303" key="3">
    <source>
    </source>
</evidence>
<evidence type="ECO:0000305" key="4"/>
<evidence type="ECO:0000305" key="5">
    <source>
    </source>
</evidence>
<evidence type="ECO:0000312" key="6">
    <source>
        <dbReference type="Araport" id="AT1G09470"/>
    </source>
</evidence>
<evidence type="ECO:0000312" key="7">
    <source>
        <dbReference type="EMBL" id="AAC33207.1"/>
    </source>
</evidence>
<reference key="1">
    <citation type="journal article" date="2000" name="Nature">
        <title>Sequence and analysis of chromosome 1 of the plant Arabidopsis thaliana.</title>
        <authorList>
            <person name="Theologis A."/>
            <person name="Ecker J.R."/>
            <person name="Palm C.J."/>
            <person name="Federspiel N.A."/>
            <person name="Kaul S."/>
            <person name="White O."/>
            <person name="Alonso J."/>
            <person name="Altafi H."/>
            <person name="Araujo R."/>
            <person name="Bowman C.L."/>
            <person name="Brooks S.Y."/>
            <person name="Buehler E."/>
            <person name="Chan A."/>
            <person name="Chao Q."/>
            <person name="Chen H."/>
            <person name="Cheuk R.F."/>
            <person name="Chin C.W."/>
            <person name="Chung M.K."/>
            <person name="Conn L."/>
            <person name="Conway A.B."/>
            <person name="Conway A.R."/>
            <person name="Creasy T.H."/>
            <person name="Dewar K."/>
            <person name="Dunn P."/>
            <person name="Etgu P."/>
            <person name="Feldblyum T.V."/>
            <person name="Feng J.-D."/>
            <person name="Fong B."/>
            <person name="Fujii C.Y."/>
            <person name="Gill J.E."/>
            <person name="Goldsmith A.D."/>
            <person name="Haas B."/>
            <person name="Hansen N.F."/>
            <person name="Hughes B."/>
            <person name="Huizar L."/>
            <person name="Hunter J.L."/>
            <person name="Jenkins J."/>
            <person name="Johnson-Hopson C."/>
            <person name="Khan S."/>
            <person name="Khaykin E."/>
            <person name="Kim C.J."/>
            <person name="Koo H.L."/>
            <person name="Kremenetskaia I."/>
            <person name="Kurtz D.B."/>
            <person name="Kwan A."/>
            <person name="Lam B."/>
            <person name="Langin-Hooper S."/>
            <person name="Lee A."/>
            <person name="Lee J.M."/>
            <person name="Lenz C.A."/>
            <person name="Li J.H."/>
            <person name="Li Y.-P."/>
            <person name="Lin X."/>
            <person name="Liu S.X."/>
            <person name="Liu Z.A."/>
            <person name="Luros J.S."/>
            <person name="Maiti R."/>
            <person name="Marziali A."/>
            <person name="Militscher J."/>
            <person name="Miranda M."/>
            <person name="Nguyen M."/>
            <person name="Nierman W.C."/>
            <person name="Osborne B.I."/>
            <person name="Pai G."/>
            <person name="Peterson J."/>
            <person name="Pham P.K."/>
            <person name="Rizzo M."/>
            <person name="Rooney T."/>
            <person name="Rowley D."/>
            <person name="Sakano H."/>
            <person name="Salzberg S.L."/>
            <person name="Schwartz J.R."/>
            <person name="Shinn P."/>
            <person name="Southwick A.M."/>
            <person name="Sun H."/>
            <person name="Tallon L.J."/>
            <person name="Tambunga G."/>
            <person name="Toriumi M.J."/>
            <person name="Town C.D."/>
            <person name="Utterback T."/>
            <person name="Van Aken S."/>
            <person name="Vaysberg M."/>
            <person name="Vysotskaia V.S."/>
            <person name="Walker M."/>
            <person name="Wu D."/>
            <person name="Yu G."/>
            <person name="Fraser C.M."/>
            <person name="Venter J.C."/>
            <person name="Davis R.W."/>
        </authorList>
    </citation>
    <scope>NUCLEOTIDE SEQUENCE [LARGE SCALE GENOMIC DNA]</scope>
    <source>
        <strain>cv. Columbia</strain>
    </source>
</reference>
<reference key="2">
    <citation type="journal article" date="2017" name="Plant J.">
        <title>Araport11: a complete reannotation of the Arabidopsis thaliana reference genome.</title>
        <authorList>
            <person name="Cheng C.Y."/>
            <person name="Krishnakumar V."/>
            <person name="Chan A.P."/>
            <person name="Thibaud-Nissen F."/>
            <person name="Schobel S."/>
            <person name="Town C.D."/>
        </authorList>
    </citation>
    <scope>GENOME REANNOTATION</scope>
    <source>
        <strain>cv. Columbia</strain>
    </source>
</reference>
<reference key="3">
    <citation type="submission" date="2005-05" db="EMBL/GenBank/DDBJ databases">
        <authorList>
            <person name="Underwood B.A."/>
            <person name="Xiao Y.-L."/>
            <person name="Moskal W.A. Jr."/>
            <person name="Monaghan E.L."/>
            <person name="Wang W."/>
            <person name="Redman J.C."/>
            <person name="Wu H.C."/>
            <person name="Utterback T."/>
            <person name="Town C.D."/>
        </authorList>
    </citation>
    <scope>NUCLEOTIDE SEQUENCE [LARGE SCALE MRNA]</scope>
    <source>
        <strain>cv. Columbia</strain>
    </source>
</reference>
<reference key="4">
    <citation type="journal article" date="2016" name="J. Exp. Bot.">
        <title>A novel family of plant nuclear envelope-associated proteins.</title>
        <authorList>
            <person name="Pawar V."/>
            <person name="Poulet A."/>
            <person name="Detourne G."/>
            <person name="Tatout C."/>
            <person name="Vanrobays E."/>
            <person name="Evans D.E."/>
            <person name="Graumann K."/>
        </authorList>
    </citation>
    <scope>GENE FAMILY</scope>
    <scope>NOMENCLATURE</scope>
    <scope>SUBCELLULAR LOCATION</scope>
    <scope>SUBUNIT</scope>
    <scope>INTERACTION WITH NEAP1; NEAP2; SUN1 AND SUN2</scope>
    <scope>DISRUPTION PHENOTYPE</scope>
</reference>
<gene>
    <name evidence="3" type="primary">NEAP3</name>
    <name evidence="6" type="ordered locus">At1g09470</name>
    <name evidence="7" type="ORF">F14J9.13</name>
</gene>
<keyword id="KW-0175">Coiled coil</keyword>
<keyword id="KW-0472">Membrane</keyword>
<keyword id="KW-0539">Nucleus</keyword>
<keyword id="KW-1185">Reference proteome</keyword>
<keyword id="KW-0812">Transmembrane</keyword>
<keyword id="KW-1133">Transmembrane helix</keyword>
<dbReference type="EMBL" id="AC003970">
    <property type="protein sequence ID" value="AAC33207.1"/>
    <property type="status" value="ALT_SEQ"/>
    <property type="molecule type" value="Genomic_DNA"/>
</dbReference>
<dbReference type="EMBL" id="CP002684">
    <property type="protein sequence ID" value="AEE28446.1"/>
    <property type="molecule type" value="Genomic_DNA"/>
</dbReference>
<dbReference type="EMBL" id="DQ056449">
    <property type="protein sequence ID" value="AAY78606.1"/>
    <property type="molecule type" value="mRNA"/>
</dbReference>
<dbReference type="PIR" id="B86228">
    <property type="entry name" value="B86228"/>
</dbReference>
<dbReference type="RefSeq" id="NP_172418.2">
    <property type="nucleotide sequence ID" value="NM_100818.5"/>
</dbReference>
<dbReference type="SMR" id="Q4PT37"/>
<dbReference type="FunCoup" id="Q4PT37">
    <property type="interactions" value="5"/>
</dbReference>
<dbReference type="STRING" id="3702.Q4PT37"/>
<dbReference type="PaxDb" id="3702-AT1G09470.1"/>
<dbReference type="EnsemblPlants" id="AT1G09470.1">
    <property type="protein sequence ID" value="AT1G09470.1"/>
    <property type="gene ID" value="AT1G09470"/>
</dbReference>
<dbReference type="GeneID" id="837470"/>
<dbReference type="Gramene" id="AT1G09470.1">
    <property type="protein sequence ID" value="AT1G09470.1"/>
    <property type="gene ID" value="AT1G09470"/>
</dbReference>
<dbReference type="KEGG" id="ath:AT1G09470"/>
<dbReference type="Araport" id="AT1G09470"/>
<dbReference type="TAIR" id="AT1G09470">
    <property type="gene designation" value="ATNEAP3"/>
</dbReference>
<dbReference type="eggNOG" id="ENOG502QUNG">
    <property type="taxonomic scope" value="Eukaryota"/>
</dbReference>
<dbReference type="HOGENOM" id="CLU_077822_0_0_1"/>
<dbReference type="InParanoid" id="Q4PT37"/>
<dbReference type="OMA" id="HWRFKTK"/>
<dbReference type="PhylomeDB" id="Q4PT37"/>
<dbReference type="PRO" id="PR:Q4PT37"/>
<dbReference type="Proteomes" id="UP000006548">
    <property type="component" value="Chromosome 1"/>
</dbReference>
<dbReference type="ExpressionAtlas" id="Q4PT37">
    <property type="expression patterns" value="baseline and differential"/>
</dbReference>
<dbReference type="GO" id="GO:0005635">
    <property type="term" value="C:nuclear envelope"/>
    <property type="evidence" value="ECO:0000314"/>
    <property type="project" value="TAIR"/>
</dbReference>
<dbReference type="GO" id="GO:0005637">
    <property type="term" value="C:nuclear inner membrane"/>
    <property type="evidence" value="ECO:0007669"/>
    <property type="project" value="UniProtKB-SubCell"/>
</dbReference>
<dbReference type="GO" id="GO:0005654">
    <property type="term" value="C:nucleoplasm"/>
    <property type="evidence" value="ECO:0000314"/>
    <property type="project" value="TAIR"/>
</dbReference>
<dbReference type="Gene3D" id="1.20.5.170">
    <property type="match status" value="1"/>
</dbReference>
<dbReference type="InterPro" id="IPR049932">
    <property type="entry name" value="NEAP1-4"/>
</dbReference>
<dbReference type="PANTHER" id="PTHR48145">
    <property type="entry name" value="NUCLEAR ENVELOPE-ASSOCIATED PROTEIN 1"/>
    <property type="match status" value="1"/>
</dbReference>
<dbReference type="PANTHER" id="PTHR48145:SF3">
    <property type="entry name" value="NUCLEAR ENVELOPE-ASSOCIATED PROTEIN 3"/>
    <property type="match status" value="1"/>
</dbReference>
<comment type="subunit">
    <text evidence="2">Forms homomers and heteromers with NEAP1 and NEAP2. Interacts with SUN1 and SUN2.</text>
</comment>
<comment type="subcellular location">
    <subcellularLocation>
        <location evidence="2">Nucleus inner membrane</location>
        <topology evidence="1">Single-pass membrane protein</topology>
    </subcellularLocation>
    <subcellularLocation>
        <location evidence="2">Nucleus</location>
        <location evidence="2">Nucleoplasm</location>
    </subcellularLocation>
</comment>
<comment type="disruption phenotype">
    <text evidence="2">Double mutants NEAP1-NEAP3 display reduced primary root growth, and altered nuclear morphology and chromatin structure.</text>
</comment>
<comment type="sequence caution" evidence="4">
    <conflict type="erroneous gene model prediction">
        <sequence resource="EMBL-CDS" id="AAC33207"/>
    </conflict>
</comment>
<organism>
    <name type="scientific">Arabidopsis thaliana</name>
    <name type="common">Mouse-ear cress</name>
    <dbReference type="NCBI Taxonomy" id="3702"/>
    <lineage>
        <taxon>Eukaryota</taxon>
        <taxon>Viridiplantae</taxon>
        <taxon>Streptophyta</taxon>
        <taxon>Embryophyta</taxon>
        <taxon>Tracheophyta</taxon>
        <taxon>Spermatophyta</taxon>
        <taxon>Magnoliopsida</taxon>
        <taxon>eudicotyledons</taxon>
        <taxon>Gunneridae</taxon>
        <taxon>Pentapetalae</taxon>
        <taxon>rosids</taxon>
        <taxon>malvids</taxon>
        <taxon>Brassicales</taxon>
        <taxon>Brassicaceae</taxon>
        <taxon>Camelineae</taxon>
        <taxon>Arabidopsis</taxon>
    </lineage>
</organism>
<accession>Q4PT37</accession>
<accession>O80530</accession>
<name>NEAP3_ARATH</name>